<protein>
    <recommendedName>
        <fullName evidence="1">Small ribosomal subunit protein bS18</fullName>
    </recommendedName>
    <alternativeName>
        <fullName evidence="2">30S ribosomal protein S18</fullName>
    </alternativeName>
</protein>
<reference key="1">
    <citation type="journal article" date="2003" name="Lancet">
        <title>Genome sequence of Vibrio parahaemolyticus: a pathogenic mechanism distinct from that of V. cholerae.</title>
        <authorList>
            <person name="Makino K."/>
            <person name="Oshima K."/>
            <person name="Kurokawa K."/>
            <person name="Yokoyama K."/>
            <person name="Uda T."/>
            <person name="Tagomori K."/>
            <person name="Iijima Y."/>
            <person name="Najima M."/>
            <person name="Nakano M."/>
            <person name="Yamashita A."/>
            <person name="Kubota Y."/>
            <person name="Kimura S."/>
            <person name="Yasunaga T."/>
            <person name="Honda T."/>
            <person name="Shinagawa H."/>
            <person name="Hattori M."/>
            <person name="Iida T."/>
        </authorList>
    </citation>
    <scope>NUCLEOTIDE SEQUENCE [LARGE SCALE GENOMIC DNA]</scope>
    <source>
        <strain>RIMD 2210633</strain>
    </source>
</reference>
<feature type="chain" id="PRO_0000111259" description="Small ribosomal subunit protein bS18">
    <location>
        <begin position="1"/>
        <end position="75"/>
    </location>
</feature>
<dbReference type="EMBL" id="BA000031">
    <property type="protein sequence ID" value="BAC61001.1"/>
    <property type="molecule type" value="Genomic_DNA"/>
</dbReference>
<dbReference type="RefSeq" id="NP_799117.1">
    <property type="nucleotide sequence ID" value="NC_004603.1"/>
</dbReference>
<dbReference type="RefSeq" id="WP_000090472.1">
    <property type="nucleotide sequence ID" value="NC_004603.1"/>
</dbReference>
<dbReference type="SMR" id="P66478"/>
<dbReference type="GeneID" id="97173128"/>
<dbReference type="KEGG" id="vpa:VP2738"/>
<dbReference type="PATRIC" id="fig|223926.6.peg.2635"/>
<dbReference type="eggNOG" id="COG0238">
    <property type="taxonomic scope" value="Bacteria"/>
</dbReference>
<dbReference type="HOGENOM" id="CLU_148710_2_3_6"/>
<dbReference type="PRO" id="PR:P66478"/>
<dbReference type="Proteomes" id="UP000002493">
    <property type="component" value="Chromosome 1"/>
</dbReference>
<dbReference type="GO" id="GO:0022627">
    <property type="term" value="C:cytosolic small ribosomal subunit"/>
    <property type="evidence" value="ECO:0007669"/>
    <property type="project" value="TreeGrafter"/>
</dbReference>
<dbReference type="GO" id="GO:0070181">
    <property type="term" value="F:small ribosomal subunit rRNA binding"/>
    <property type="evidence" value="ECO:0007669"/>
    <property type="project" value="TreeGrafter"/>
</dbReference>
<dbReference type="GO" id="GO:0003735">
    <property type="term" value="F:structural constituent of ribosome"/>
    <property type="evidence" value="ECO:0007669"/>
    <property type="project" value="InterPro"/>
</dbReference>
<dbReference type="GO" id="GO:0006412">
    <property type="term" value="P:translation"/>
    <property type="evidence" value="ECO:0007669"/>
    <property type="project" value="UniProtKB-UniRule"/>
</dbReference>
<dbReference type="FunFam" id="4.10.640.10:FF:000001">
    <property type="entry name" value="30S ribosomal protein S18"/>
    <property type="match status" value="1"/>
</dbReference>
<dbReference type="Gene3D" id="4.10.640.10">
    <property type="entry name" value="Ribosomal protein S18"/>
    <property type="match status" value="1"/>
</dbReference>
<dbReference type="HAMAP" id="MF_00270">
    <property type="entry name" value="Ribosomal_bS18"/>
    <property type="match status" value="1"/>
</dbReference>
<dbReference type="InterPro" id="IPR001648">
    <property type="entry name" value="Ribosomal_bS18"/>
</dbReference>
<dbReference type="InterPro" id="IPR018275">
    <property type="entry name" value="Ribosomal_bS18_CS"/>
</dbReference>
<dbReference type="InterPro" id="IPR036870">
    <property type="entry name" value="Ribosomal_bS18_sf"/>
</dbReference>
<dbReference type="NCBIfam" id="TIGR00165">
    <property type="entry name" value="S18"/>
    <property type="match status" value="1"/>
</dbReference>
<dbReference type="PANTHER" id="PTHR13479">
    <property type="entry name" value="30S RIBOSOMAL PROTEIN S18"/>
    <property type="match status" value="1"/>
</dbReference>
<dbReference type="PANTHER" id="PTHR13479:SF40">
    <property type="entry name" value="SMALL RIBOSOMAL SUBUNIT PROTEIN BS18M"/>
    <property type="match status" value="1"/>
</dbReference>
<dbReference type="Pfam" id="PF01084">
    <property type="entry name" value="Ribosomal_S18"/>
    <property type="match status" value="1"/>
</dbReference>
<dbReference type="PRINTS" id="PR00974">
    <property type="entry name" value="RIBOSOMALS18"/>
</dbReference>
<dbReference type="SUPFAM" id="SSF46911">
    <property type="entry name" value="Ribosomal protein S18"/>
    <property type="match status" value="1"/>
</dbReference>
<dbReference type="PROSITE" id="PS00057">
    <property type="entry name" value="RIBOSOMAL_S18"/>
    <property type="match status" value="1"/>
</dbReference>
<sequence length="75" mass="8843">MARFFRRRKFCRFTAEGVQEIDYKDVATLKNYITEAGKIVPSRITGTSAKYQRQLARAIKRSRYLALLPYTDKHQ</sequence>
<evidence type="ECO:0000255" key="1">
    <source>
        <dbReference type="HAMAP-Rule" id="MF_00270"/>
    </source>
</evidence>
<evidence type="ECO:0000305" key="2"/>
<proteinExistence type="inferred from homology"/>
<organism>
    <name type="scientific">Vibrio parahaemolyticus serotype O3:K6 (strain RIMD 2210633)</name>
    <dbReference type="NCBI Taxonomy" id="223926"/>
    <lineage>
        <taxon>Bacteria</taxon>
        <taxon>Pseudomonadati</taxon>
        <taxon>Pseudomonadota</taxon>
        <taxon>Gammaproteobacteria</taxon>
        <taxon>Vibrionales</taxon>
        <taxon>Vibrionaceae</taxon>
        <taxon>Vibrio</taxon>
    </lineage>
</organism>
<comment type="function">
    <text evidence="1">Binds as a heterodimer with protein bS6 to the central domain of the 16S rRNA, where it helps stabilize the platform of the 30S subunit.</text>
</comment>
<comment type="subunit">
    <text evidence="1">Part of the 30S ribosomal subunit. Forms a tight heterodimer with protein bS6.</text>
</comment>
<comment type="similarity">
    <text evidence="1">Belongs to the bacterial ribosomal protein bS18 family.</text>
</comment>
<name>RS18_VIBPA</name>
<accession>P66478</accession>
<accession>Q87L74</accession>
<accession>Q8DCL4</accession>
<keyword id="KW-0687">Ribonucleoprotein</keyword>
<keyword id="KW-0689">Ribosomal protein</keyword>
<keyword id="KW-0694">RNA-binding</keyword>
<keyword id="KW-0699">rRNA-binding</keyword>
<gene>
    <name evidence="1" type="primary">rpsR</name>
    <name type="ordered locus">VP2738</name>
</gene>